<gene>
    <name evidence="1" type="primary">metAS</name>
    <name type="ordered locus">Sbal_1493</name>
</gene>
<name>METAS_SHEB5</name>
<keyword id="KW-0012">Acyltransferase</keyword>
<keyword id="KW-0028">Amino-acid biosynthesis</keyword>
<keyword id="KW-0963">Cytoplasm</keyword>
<keyword id="KW-0486">Methionine biosynthesis</keyword>
<keyword id="KW-1185">Reference proteome</keyword>
<keyword id="KW-0808">Transferase</keyword>
<evidence type="ECO:0000255" key="1">
    <source>
        <dbReference type="HAMAP-Rule" id="MF_00295"/>
    </source>
</evidence>
<comment type="function">
    <text evidence="1">Transfers a succinyl group from succinyl-CoA to L-homoserine, forming succinyl-L-homoserine.</text>
</comment>
<comment type="catalytic activity">
    <reaction evidence="1">
        <text>L-homoserine + succinyl-CoA = O-succinyl-L-homoserine + CoA</text>
        <dbReference type="Rhea" id="RHEA:22008"/>
        <dbReference type="ChEBI" id="CHEBI:57287"/>
        <dbReference type="ChEBI" id="CHEBI:57292"/>
        <dbReference type="ChEBI" id="CHEBI:57476"/>
        <dbReference type="ChEBI" id="CHEBI:57661"/>
        <dbReference type="EC" id="2.3.1.46"/>
    </reaction>
</comment>
<comment type="pathway">
    <text evidence="1">Amino-acid biosynthesis; L-methionine biosynthesis via de novo pathway; O-succinyl-L-homoserine from L-homoserine: step 1/1.</text>
</comment>
<comment type="subcellular location">
    <subcellularLocation>
        <location evidence="1">Cytoplasm</location>
    </subcellularLocation>
</comment>
<comment type="similarity">
    <text evidence="1">Belongs to the MetA family.</text>
</comment>
<dbReference type="EC" id="2.3.1.46" evidence="1"/>
<dbReference type="EMBL" id="CP000563">
    <property type="protein sequence ID" value="ABN61011.1"/>
    <property type="molecule type" value="Genomic_DNA"/>
</dbReference>
<dbReference type="SMR" id="A3D2P8"/>
<dbReference type="STRING" id="325240.Sbal_1493"/>
<dbReference type="KEGG" id="sbl:Sbal_1493"/>
<dbReference type="HOGENOM" id="CLU_057851_0_1_6"/>
<dbReference type="OrthoDB" id="9772423at2"/>
<dbReference type="UniPathway" id="UPA00051">
    <property type="reaction ID" value="UER00075"/>
</dbReference>
<dbReference type="Proteomes" id="UP000001557">
    <property type="component" value="Chromosome"/>
</dbReference>
<dbReference type="GO" id="GO:0005737">
    <property type="term" value="C:cytoplasm"/>
    <property type="evidence" value="ECO:0007669"/>
    <property type="project" value="UniProtKB-SubCell"/>
</dbReference>
<dbReference type="GO" id="GO:0004414">
    <property type="term" value="F:homoserine O-acetyltransferase activity"/>
    <property type="evidence" value="ECO:0007669"/>
    <property type="project" value="UniProtKB-UniRule"/>
</dbReference>
<dbReference type="GO" id="GO:0008899">
    <property type="term" value="F:homoserine O-succinyltransferase activity"/>
    <property type="evidence" value="ECO:0007669"/>
    <property type="project" value="UniProtKB-EC"/>
</dbReference>
<dbReference type="GO" id="GO:0019281">
    <property type="term" value="P:L-methionine biosynthetic process from homoserine via O-succinyl-L-homoserine and cystathionine"/>
    <property type="evidence" value="ECO:0007669"/>
    <property type="project" value="InterPro"/>
</dbReference>
<dbReference type="CDD" id="cd03131">
    <property type="entry name" value="GATase1_HTS"/>
    <property type="match status" value="1"/>
</dbReference>
<dbReference type="FunFam" id="3.40.50.880:FF:000004">
    <property type="entry name" value="Homoserine O-succinyltransferase"/>
    <property type="match status" value="1"/>
</dbReference>
<dbReference type="Gene3D" id="3.40.50.880">
    <property type="match status" value="1"/>
</dbReference>
<dbReference type="HAMAP" id="MF_00295">
    <property type="entry name" value="MetA_acyltransf"/>
    <property type="match status" value="1"/>
</dbReference>
<dbReference type="InterPro" id="IPR029062">
    <property type="entry name" value="Class_I_gatase-like"/>
</dbReference>
<dbReference type="InterPro" id="IPR005697">
    <property type="entry name" value="HST_MetA"/>
</dbReference>
<dbReference type="InterPro" id="IPR033752">
    <property type="entry name" value="MetA_family"/>
</dbReference>
<dbReference type="NCBIfam" id="TIGR01001">
    <property type="entry name" value="metA"/>
    <property type="match status" value="1"/>
</dbReference>
<dbReference type="PANTHER" id="PTHR20919">
    <property type="entry name" value="HOMOSERINE O-SUCCINYLTRANSFERASE"/>
    <property type="match status" value="1"/>
</dbReference>
<dbReference type="PANTHER" id="PTHR20919:SF0">
    <property type="entry name" value="HOMOSERINE O-SUCCINYLTRANSFERASE"/>
    <property type="match status" value="1"/>
</dbReference>
<dbReference type="Pfam" id="PF04204">
    <property type="entry name" value="HTS"/>
    <property type="match status" value="1"/>
</dbReference>
<dbReference type="PIRSF" id="PIRSF000450">
    <property type="entry name" value="H_ser_succinyltr"/>
    <property type="match status" value="1"/>
</dbReference>
<dbReference type="SUPFAM" id="SSF52317">
    <property type="entry name" value="Class I glutamine amidotransferase-like"/>
    <property type="match status" value="1"/>
</dbReference>
<accession>A3D2P8</accession>
<protein>
    <recommendedName>
        <fullName evidence="1">Homoserine O-succinyltransferase</fullName>
        <shortName evidence="1">HST</shortName>
        <ecNumber evidence="1">2.3.1.46</ecNumber>
    </recommendedName>
    <alternativeName>
        <fullName evidence="1">Homoserine transsuccinylase</fullName>
        <shortName evidence="1">HTS</shortName>
    </alternativeName>
</protein>
<organism>
    <name type="scientific">Shewanella baltica (strain OS155 / ATCC BAA-1091)</name>
    <dbReference type="NCBI Taxonomy" id="325240"/>
    <lineage>
        <taxon>Bacteria</taxon>
        <taxon>Pseudomonadati</taxon>
        <taxon>Pseudomonadota</taxon>
        <taxon>Gammaproteobacteria</taxon>
        <taxon>Alteromonadales</taxon>
        <taxon>Shewanellaceae</taxon>
        <taxon>Shewanella</taxon>
    </lineage>
</organism>
<feature type="chain" id="PRO_1000021833" description="Homoserine O-succinyltransferase">
    <location>
        <begin position="1"/>
        <end position="313"/>
    </location>
</feature>
<feature type="active site" description="Acyl-thioester intermediate" evidence="1">
    <location>
        <position position="142"/>
    </location>
</feature>
<feature type="active site" description="Proton acceptor" evidence="1">
    <location>
        <position position="235"/>
    </location>
</feature>
<feature type="active site" evidence="1">
    <location>
        <position position="237"/>
    </location>
</feature>
<feature type="binding site" evidence="1">
    <location>
        <position position="163"/>
    </location>
    <ligand>
        <name>substrate</name>
    </ligand>
</feature>
<feature type="binding site" evidence="1">
    <location>
        <position position="192"/>
    </location>
    <ligand>
        <name>substrate</name>
    </ligand>
</feature>
<feature type="binding site" evidence="1">
    <location>
        <position position="249"/>
    </location>
    <ligand>
        <name>substrate</name>
    </ligand>
</feature>
<feature type="site" description="Important for acyl-CoA specificity" evidence="1">
    <location>
        <position position="111"/>
    </location>
</feature>
<feature type="site" description="Important for substrate specificity" evidence="1">
    <location>
        <position position="192"/>
    </location>
</feature>
<proteinExistence type="inferred from homology"/>
<reference key="1">
    <citation type="submission" date="2007-02" db="EMBL/GenBank/DDBJ databases">
        <title>Complete sequence of chromosome of Shewanella baltica OS155.</title>
        <authorList>
            <consortium name="US DOE Joint Genome Institute"/>
            <person name="Copeland A."/>
            <person name="Lucas S."/>
            <person name="Lapidus A."/>
            <person name="Barry K."/>
            <person name="Detter J.C."/>
            <person name="Glavina del Rio T."/>
            <person name="Hammon N."/>
            <person name="Israni S."/>
            <person name="Dalin E."/>
            <person name="Tice H."/>
            <person name="Pitluck S."/>
            <person name="Sims D.R."/>
            <person name="Brettin T."/>
            <person name="Bruce D."/>
            <person name="Han C."/>
            <person name="Tapia R."/>
            <person name="Brainard J."/>
            <person name="Schmutz J."/>
            <person name="Larimer F."/>
            <person name="Land M."/>
            <person name="Hauser L."/>
            <person name="Kyrpides N."/>
            <person name="Mikhailova N."/>
            <person name="Brettar I."/>
            <person name="Klappenbach J."/>
            <person name="Konstantinidis K."/>
            <person name="Rodrigues J."/>
            <person name="Tiedje J."/>
            <person name="Richardson P."/>
        </authorList>
    </citation>
    <scope>NUCLEOTIDE SEQUENCE [LARGE SCALE GENOMIC DNA]</scope>
    <source>
        <strain>OS155 / ATCC BAA-1091</strain>
    </source>
</reference>
<sequence length="313" mass="36613">MPVRIPDHLPAAEVLESENIFVMSETRAANQDIRPMKVLILNLMPNKIETETQLLRLLGNTPLQVDVDLLRIHDKESKHTSIDHMNTFYRDFEAVRHKNYDGLIITGAPLGQIDFEDVVYWDHIREIIDWSQEHVTSVLFLCWAAHAGLYHLYGLNRKILQQKRSGVFVHRRTSQHFPLLRGFDDEFFAPHSRFAEMDVEEIRQHPQLQLLAESDEAGAYLVLSRNNRNLFVMGHPEYQKSTLNEEYQRDLSQGLDPNVPQNYYRNDDPKADAIARWHSHGSLLVSNWLNYYVYQLTPYDLSDMTAMTPWESR</sequence>